<reference key="1">
    <citation type="journal article" date="2003" name="Proc. Natl. Acad. Sci. U.S.A.">
        <title>Reductive genome evolution in Buchnera aphidicola.</title>
        <authorList>
            <person name="van Ham R.C.H.J."/>
            <person name="Kamerbeek J."/>
            <person name="Palacios C."/>
            <person name="Rausell C."/>
            <person name="Abascal F."/>
            <person name="Bastolla U."/>
            <person name="Fernandez J.M."/>
            <person name="Jimenez L."/>
            <person name="Postigo M."/>
            <person name="Silva F.J."/>
            <person name="Tamames J."/>
            <person name="Viguera E."/>
            <person name="Latorre A."/>
            <person name="Valencia A."/>
            <person name="Moran F."/>
            <person name="Moya A."/>
        </authorList>
    </citation>
    <scope>NUCLEOTIDE SEQUENCE [LARGE SCALE GENOMIC DNA]</scope>
    <source>
        <strain>Bp</strain>
    </source>
</reference>
<proteinExistence type="inferred from homology"/>
<sequence length="550" mass="58130">MAAKDVKFGNEARVKMLRGVNVLADAVKVTLGPKGRNVVLDKSFGAPSITKDGVSVAREIELEDKFENMGAQMVKEVASKANDAAGDGTTTATLLAQAIVNEGLKAVAAGMNPMDLKRGIDKAVISAVEELRIMSVPCADSKAITQVGTISANADEKVGSLIADAMDKVGKDGVITVEEGTGLQDELEVVKGMQFDRGYLSPYFINKPETGIVELENPYILMADKKISNVRELLPILEAVAKSGKPLLIISEDLEGEALATLVVNSMRGIVKVAAVKAPGFGDRRKAMLQDISILTSGSVISEELAMELEKSTLEDLGQAKRVVINKDTTTIIGGIGEKYNIQSRISQIRQQIQEATSDYDKEKLNERLAKLSGGVAVLKVGAATEVEMKEKKARVEDALHATRAAVEEGVVPGGGVALVRVAAKISNIVGQNEDQNVGIRVALRAMEAPLRQIVSNSGEEPSVVTNNVKDGKGNYGYNAATDEYGDMISFGILDPTKVTRSALQYASSVAGLMITTECMVTDLPKDEKSDLGNSSAPSAGGMGGMGGMM</sequence>
<comment type="function">
    <text evidence="1">Together with its co-chaperonin GroES, plays an essential role in assisting protein folding. The GroEL-GroES system forms a nano-cage that allows encapsulation of the non-native substrate proteins and provides a physical environment optimized to promote and accelerate protein folding.</text>
</comment>
<comment type="catalytic activity">
    <reaction evidence="1">
        <text>ATP + H2O + a folded polypeptide = ADP + phosphate + an unfolded polypeptide.</text>
        <dbReference type="EC" id="5.6.1.7"/>
    </reaction>
</comment>
<comment type="subunit">
    <text evidence="1">Forms a cylinder of 14 subunits composed of two heptameric rings stacked back-to-back. Interacts with the co-chaperonin GroES.</text>
</comment>
<comment type="subcellular location">
    <subcellularLocation>
        <location evidence="1">Cytoplasm</location>
    </subcellularLocation>
</comment>
<comment type="similarity">
    <text evidence="1">Belongs to the chaperonin (HSP60) family.</text>
</comment>
<keyword id="KW-0067">ATP-binding</keyword>
<keyword id="KW-0143">Chaperone</keyword>
<keyword id="KW-0963">Cytoplasm</keyword>
<keyword id="KW-0413">Isomerase</keyword>
<keyword id="KW-0547">Nucleotide-binding</keyword>
<keyword id="KW-1185">Reference proteome</keyword>
<name>CH60_BUCBP</name>
<protein>
    <recommendedName>
        <fullName evidence="1">Chaperonin GroEL</fullName>
        <ecNumber evidence="1">5.6.1.7</ecNumber>
    </recommendedName>
    <alternativeName>
        <fullName evidence="1">60 kDa chaperonin</fullName>
    </alternativeName>
    <alternativeName>
        <fullName evidence="1">Chaperonin-60</fullName>
        <shortName evidence="1">Cpn60</shortName>
    </alternativeName>
</protein>
<evidence type="ECO:0000255" key="1">
    <source>
        <dbReference type="HAMAP-Rule" id="MF_00600"/>
    </source>
</evidence>
<evidence type="ECO:0000256" key="2">
    <source>
        <dbReference type="SAM" id="MobiDB-lite"/>
    </source>
</evidence>
<dbReference type="EC" id="5.6.1.7" evidence="1"/>
<dbReference type="EMBL" id="AE016826">
    <property type="protein sequence ID" value="AAO26764.1"/>
    <property type="molecule type" value="Genomic_DNA"/>
</dbReference>
<dbReference type="RefSeq" id="WP_011091165.1">
    <property type="nucleotide sequence ID" value="NC_004545.1"/>
</dbReference>
<dbReference type="SMR" id="P59526"/>
<dbReference type="STRING" id="224915.bbp_021"/>
<dbReference type="KEGG" id="bab:bbp_021"/>
<dbReference type="eggNOG" id="COG0459">
    <property type="taxonomic scope" value="Bacteria"/>
</dbReference>
<dbReference type="HOGENOM" id="CLU_016503_3_0_6"/>
<dbReference type="OrthoDB" id="9766614at2"/>
<dbReference type="Proteomes" id="UP000000601">
    <property type="component" value="Chromosome"/>
</dbReference>
<dbReference type="GO" id="GO:0005737">
    <property type="term" value="C:cytoplasm"/>
    <property type="evidence" value="ECO:0007669"/>
    <property type="project" value="UniProtKB-SubCell"/>
</dbReference>
<dbReference type="GO" id="GO:0005524">
    <property type="term" value="F:ATP binding"/>
    <property type="evidence" value="ECO:0007669"/>
    <property type="project" value="UniProtKB-UniRule"/>
</dbReference>
<dbReference type="GO" id="GO:0140662">
    <property type="term" value="F:ATP-dependent protein folding chaperone"/>
    <property type="evidence" value="ECO:0007669"/>
    <property type="project" value="InterPro"/>
</dbReference>
<dbReference type="GO" id="GO:0016853">
    <property type="term" value="F:isomerase activity"/>
    <property type="evidence" value="ECO:0007669"/>
    <property type="project" value="UniProtKB-KW"/>
</dbReference>
<dbReference type="GO" id="GO:0051082">
    <property type="term" value="F:unfolded protein binding"/>
    <property type="evidence" value="ECO:0007669"/>
    <property type="project" value="UniProtKB-UniRule"/>
</dbReference>
<dbReference type="GO" id="GO:0042026">
    <property type="term" value="P:protein refolding"/>
    <property type="evidence" value="ECO:0007669"/>
    <property type="project" value="UniProtKB-UniRule"/>
</dbReference>
<dbReference type="CDD" id="cd03344">
    <property type="entry name" value="GroEL"/>
    <property type="match status" value="1"/>
</dbReference>
<dbReference type="FunFam" id="1.10.560.10:FF:000001">
    <property type="entry name" value="60 kDa chaperonin"/>
    <property type="match status" value="1"/>
</dbReference>
<dbReference type="FunFam" id="3.50.7.10:FF:000001">
    <property type="entry name" value="60 kDa chaperonin"/>
    <property type="match status" value="1"/>
</dbReference>
<dbReference type="Gene3D" id="3.50.7.10">
    <property type="entry name" value="GroEL"/>
    <property type="match status" value="1"/>
</dbReference>
<dbReference type="Gene3D" id="1.10.560.10">
    <property type="entry name" value="GroEL-like equatorial domain"/>
    <property type="match status" value="1"/>
</dbReference>
<dbReference type="Gene3D" id="3.30.260.10">
    <property type="entry name" value="TCP-1-like chaperonin intermediate domain"/>
    <property type="match status" value="1"/>
</dbReference>
<dbReference type="HAMAP" id="MF_00600">
    <property type="entry name" value="CH60"/>
    <property type="match status" value="1"/>
</dbReference>
<dbReference type="InterPro" id="IPR018370">
    <property type="entry name" value="Chaperonin_Cpn60_CS"/>
</dbReference>
<dbReference type="InterPro" id="IPR001844">
    <property type="entry name" value="Cpn60/GroEL"/>
</dbReference>
<dbReference type="InterPro" id="IPR002423">
    <property type="entry name" value="Cpn60/GroEL/TCP-1"/>
</dbReference>
<dbReference type="InterPro" id="IPR027409">
    <property type="entry name" value="GroEL-like_apical_dom_sf"/>
</dbReference>
<dbReference type="InterPro" id="IPR027413">
    <property type="entry name" value="GROEL-like_equatorial_sf"/>
</dbReference>
<dbReference type="InterPro" id="IPR027410">
    <property type="entry name" value="TCP-1-like_intermed_sf"/>
</dbReference>
<dbReference type="NCBIfam" id="TIGR02348">
    <property type="entry name" value="GroEL"/>
    <property type="match status" value="1"/>
</dbReference>
<dbReference type="NCBIfam" id="NF000592">
    <property type="entry name" value="PRK00013.1"/>
    <property type="match status" value="1"/>
</dbReference>
<dbReference type="NCBIfam" id="NF009487">
    <property type="entry name" value="PRK12849.1"/>
    <property type="match status" value="1"/>
</dbReference>
<dbReference type="NCBIfam" id="NF009488">
    <property type="entry name" value="PRK12850.1"/>
    <property type="match status" value="1"/>
</dbReference>
<dbReference type="NCBIfam" id="NF009489">
    <property type="entry name" value="PRK12851.1"/>
    <property type="match status" value="1"/>
</dbReference>
<dbReference type="PANTHER" id="PTHR45633">
    <property type="entry name" value="60 KDA HEAT SHOCK PROTEIN, MITOCHONDRIAL"/>
    <property type="match status" value="1"/>
</dbReference>
<dbReference type="Pfam" id="PF00118">
    <property type="entry name" value="Cpn60_TCP1"/>
    <property type="match status" value="1"/>
</dbReference>
<dbReference type="PRINTS" id="PR00298">
    <property type="entry name" value="CHAPERONIN60"/>
</dbReference>
<dbReference type="SUPFAM" id="SSF52029">
    <property type="entry name" value="GroEL apical domain-like"/>
    <property type="match status" value="1"/>
</dbReference>
<dbReference type="SUPFAM" id="SSF48592">
    <property type="entry name" value="GroEL equatorial domain-like"/>
    <property type="match status" value="1"/>
</dbReference>
<dbReference type="SUPFAM" id="SSF54849">
    <property type="entry name" value="GroEL-intermediate domain like"/>
    <property type="match status" value="1"/>
</dbReference>
<dbReference type="PROSITE" id="PS00296">
    <property type="entry name" value="CHAPERONINS_CPN60"/>
    <property type="match status" value="1"/>
</dbReference>
<accession>P59526</accession>
<organism>
    <name type="scientific">Buchnera aphidicola subsp. Baizongia pistaciae (strain Bp)</name>
    <dbReference type="NCBI Taxonomy" id="224915"/>
    <lineage>
        <taxon>Bacteria</taxon>
        <taxon>Pseudomonadati</taxon>
        <taxon>Pseudomonadota</taxon>
        <taxon>Gammaproteobacteria</taxon>
        <taxon>Enterobacterales</taxon>
        <taxon>Erwiniaceae</taxon>
        <taxon>Buchnera</taxon>
    </lineage>
</organism>
<feature type="chain" id="PRO_0000063307" description="Chaperonin GroEL">
    <location>
        <begin position="1"/>
        <end position="550"/>
    </location>
</feature>
<feature type="region of interest" description="Disordered" evidence="2">
    <location>
        <begin position="526"/>
        <end position="550"/>
    </location>
</feature>
<feature type="compositionally biased region" description="Gly residues" evidence="2">
    <location>
        <begin position="541"/>
        <end position="550"/>
    </location>
</feature>
<feature type="binding site" evidence="1">
    <location>
        <begin position="30"/>
        <end position="33"/>
    </location>
    <ligand>
        <name>ATP</name>
        <dbReference type="ChEBI" id="CHEBI:30616"/>
    </ligand>
</feature>
<feature type="binding site" evidence="1">
    <location>
        <position position="51"/>
    </location>
    <ligand>
        <name>ATP</name>
        <dbReference type="ChEBI" id="CHEBI:30616"/>
    </ligand>
</feature>
<feature type="binding site" evidence="1">
    <location>
        <begin position="87"/>
        <end position="91"/>
    </location>
    <ligand>
        <name>ATP</name>
        <dbReference type="ChEBI" id="CHEBI:30616"/>
    </ligand>
</feature>
<feature type="binding site" evidence="1">
    <location>
        <position position="415"/>
    </location>
    <ligand>
        <name>ATP</name>
        <dbReference type="ChEBI" id="CHEBI:30616"/>
    </ligand>
</feature>
<feature type="binding site" evidence="1">
    <location>
        <begin position="479"/>
        <end position="481"/>
    </location>
    <ligand>
        <name>ATP</name>
        <dbReference type="ChEBI" id="CHEBI:30616"/>
    </ligand>
</feature>
<feature type="binding site" evidence="1">
    <location>
        <position position="495"/>
    </location>
    <ligand>
        <name>ATP</name>
        <dbReference type="ChEBI" id="CHEBI:30616"/>
    </ligand>
</feature>
<gene>
    <name evidence="1" type="primary">groEL</name>
    <name evidence="1" type="synonym">groL</name>
    <name type="synonym">mopA</name>
    <name type="ordered locus">bbp_021</name>
</gene>